<comment type="function">
    <text evidence="1">Together with LptE, is involved in the assembly of lipopolysaccharide (LPS) at the surface of the outer membrane.</text>
</comment>
<comment type="subunit">
    <text evidence="1">Component of the lipopolysaccharide transport and assembly complex. Interacts with LptE and LptA.</text>
</comment>
<comment type="subcellular location">
    <subcellularLocation>
        <location evidence="1">Cell outer membrane</location>
    </subcellularLocation>
</comment>
<comment type="similarity">
    <text evidence="1">Belongs to the LptD family.</text>
</comment>
<evidence type="ECO:0000255" key="1">
    <source>
        <dbReference type="HAMAP-Rule" id="MF_01411"/>
    </source>
</evidence>
<organism>
    <name type="scientific">Idiomarina loihiensis (strain ATCC BAA-735 / DSM 15497 / L2-TR)</name>
    <dbReference type="NCBI Taxonomy" id="283942"/>
    <lineage>
        <taxon>Bacteria</taxon>
        <taxon>Pseudomonadati</taxon>
        <taxon>Pseudomonadota</taxon>
        <taxon>Gammaproteobacteria</taxon>
        <taxon>Alteromonadales</taxon>
        <taxon>Idiomarinaceae</taxon>
        <taxon>Idiomarina</taxon>
    </lineage>
</organism>
<proteinExistence type="inferred from homology"/>
<name>LPTD_IDILO</name>
<feature type="signal peptide" evidence="1">
    <location>
        <begin position="1"/>
        <end position="20"/>
    </location>
</feature>
<feature type="chain" id="PRO_0000281612" description="LPS-assembly protein LptD">
    <location>
        <begin position="21"/>
        <end position="757"/>
    </location>
</feature>
<dbReference type="EMBL" id="AE017340">
    <property type="protein sequence ID" value="AAV83061.1"/>
    <property type="molecule type" value="Genomic_DNA"/>
</dbReference>
<dbReference type="RefSeq" id="WP_011235456.1">
    <property type="nucleotide sequence ID" value="NC_006512.1"/>
</dbReference>
<dbReference type="SMR" id="Q5QVP0"/>
<dbReference type="STRING" id="283942.IL2229"/>
<dbReference type="GeneID" id="41337418"/>
<dbReference type="KEGG" id="ilo:IL2229"/>
<dbReference type="eggNOG" id="COG1452">
    <property type="taxonomic scope" value="Bacteria"/>
</dbReference>
<dbReference type="HOGENOM" id="CLU_009039_0_0_6"/>
<dbReference type="OrthoDB" id="9760225at2"/>
<dbReference type="Proteomes" id="UP000001171">
    <property type="component" value="Chromosome"/>
</dbReference>
<dbReference type="GO" id="GO:0009279">
    <property type="term" value="C:cell outer membrane"/>
    <property type="evidence" value="ECO:0007669"/>
    <property type="project" value="UniProtKB-SubCell"/>
</dbReference>
<dbReference type="GO" id="GO:1990351">
    <property type="term" value="C:transporter complex"/>
    <property type="evidence" value="ECO:0007669"/>
    <property type="project" value="TreeGrafter"/>
</dbReference>
<dbReference type="GO" id="GO:0043165">
    <property type="term" value="P:Gram-negative-bacterium-type cell outer membrane assembly"/>
    <property type="evidence" value="ECO:0007669"/>
    <property type="project" value="UniProtKB-UniRule"/>
</dbReference>
<dbReference type="GO" id="GO:0015920">
    <property type="term" value="P:lipopolysaccharide transport"/>
    <property type="evidence" value="ECO:0007669"/>
    <property type="project" value="InterPro"/>
</dbReference>
<dbReference type="Gene3D" id="2.60.450.10">
    <property type="entry name" value="Lipopolysaccharide (LPS) transport protein A like domain"/>
    <property type="match status" value="1"/>
</dbReference>
<dbReference type="HAMAP" id="MF_01411">
    <property type="entry name" value="LPS_assembly_LptD"/>
    <property type="match status" value="1"/>
</dbReference>
<dbReference type="InterPro" id="IPR020889">
    <property type="entry name" value="LipoPS_assembly_LptD"/>
</dbReference>
<dbReference type="InterPro" id="IPR050218">
    <property type="entry name" value="LptD"/>
</dbReference>
<dbReference type="InterPro" id="IPR007543">
    <property type="entry name" value="LptD_C"/>
</dbReference>
<dbReference type="InterPro" id="IPR005653">
    <property type="entry name" value="OstA-like_N"/>
</dbReference>
<dbReference type="PANTHER" id="PTHR30189">
    <property type="entry name" value="LPS-ASSEMBLY PROTEIN"/>
    <property type="match status" value="1"/>
</dbReference>
<dbReference type="PANTHER" id="PTHR30189:SF1">
    <property type="entry name" value="LPS-ASSEMBLY PROTEIN LPTD"/>
    <property type="match status" value="1"/>
</dbReference>
<dbReference type="Pfam" id="PF04453">
    <property type="entry name" value="LptD"/>
    <property type="match status" value="1"/>
</dbReference>
<dbReference type="Pfam" id="PF03968">
    <property type="entry name" value="LptD_N"/>
    <property type="match status" value="1"/>
</dbReference>
<keyword id="KW-0998">Cell outer membrane</keyword>
<keyword id="KW-0472">Membrane</keyword>
<keyword id="KW-1185">Reference proteome</keyword>
<keyword id="KW-0732">Signal</keyword>
<protein>
    <recommendedName>
        <fullName evidence="1">LPS-assembly protein LptD</fullName>
    </recommendedName>
</protein>
<reference key="1">
    <citation type="journal article" date="2004" name="Proc. Natl. Acad. Sci. U.S.A.">
        <title>Genome sequence of the deep-sea gamma-proteobacterium Idiomarina loihiensis reveals amino acid fermentation as a source of carbon and energy.</title>
        <authorList>
            <person name="Hou S."/>
            <person name="Saw J.H."/>
            <person name="Lee K.S."/>
            <person name="Freitas T.A."/>
            <person name="Belisle C."/>
            <person name="Kawarabayasi Y."/>
            <person name="Donachie S.P."/>
            <person name="Pikina A."/>
            <person name="Galperin M.Y."/>
            <person name="Koonin E.V."/>
            <person name="Makarova K.S."/>
            <person name="Omelchenko M.V."/>
            <person name="Sorokin A."/>
            <person name="Wolf Y.I."/>
            <person name="Li Q.X."/>
            <person name="Keum Y.S."/>
            <person name="Campbell S."/>
            <person name="Denery J."/>
            <person name="Aizawa S."/>
            <person name="Shibata S."/>
            <person name="Malahoff A."/>
            <person name="Alam M."/>
        </authorList>
    </citation>
    <scope>NUCLEOTIDE SEQUENCE [LARGE SCALE GENOMIC DNA]</scope>
    <source>
        <strain>ATCC BAA-735 / DSM 15497 / L2-TR</strain>
    </source>
</reference>
<accession>Q5QVP0</accession>
<sequence>MLQRFITSLMLLPFPGSALAALQNQDAPQHMTCTVAQPTESMIGAVQLQKTEAGTIGVESRSAEILANEKAYFTGNVIIQRNGQWLSTSKATIDQQRGEILASDGITFNDGYLSVTGDSLSLDLNDDQAKLYNSDYRLQNHNARGHAELLSLSRQEVLLQDSSFTTCPGETPAWQLRAERIEINETSDFGEAWHARFELFDVPVLYLPYFNFPLSDARKTGLLYPTFDSSSNSGFEVEVPYYFNIAPNMDATIAPVYMSERGTMMKGEYRYLFEQNAGQFNLEYLGNDDTRIANKKRYLWHVQHSAQINQDLSFYLDATEISDDNYLNDFGSDFAGRADTHLYRVAQLDYDNENWTAQLRTEDYELIGDYRSPYRTLPQLSIDYNTGDFTGFSASLYNELTYFQNQDQTREYATRAHIEPSIQYRFEKPAFDTEAELSYLYTRYWQESPDANITEEVTRTLPRARVRARLHLERAIELGDSQYRQTLSPQIQYLYVPYENQQNIGIYDTSLLQDDYHGLFRSRRFSGLDRIAEANQITYGVSSSLFTQNEREVLRASIGQIYNINDSRTQLFASDEETTTSSNSEWVADINWAVDENWSIRSSIQYDTELNTTRKSQTAVEFRKDESNLIQVSHRTATNILNNDIEQVGTQAVWSANSRWQVASNVFYDLTHDRLNDAMVGIQYSSCCWALRVSAYRRINRDLEPAFSATQINGETQFDNGISIQFIISGLASDSSGLINMLEKSTYGYRRPFYLSN</sequence>
<gene>
    <name evidence="1" type="primary">lptD</name>
    <name type="synonym">imp</name>
    <name type="synonym">ostA</name>
    <name type="ordered locus">IL2229</name>
</gene>